<organism>
    <name type="scientific">Homo sapiens</name>
    <name type="common">Human</name>
    <dbReference type="NCBI Taxonomy" id="9606"/>
    <lineage>
        <taxon>Eukaryota</taxon>
        <taxon>Metazoa</taxon>
        <taxon>Chordata</taxon>
        <taxon>Craniata</taxon>
        <taxon>Vertebrata</taxon>
        <taxon>Euteleostomi</taxon>
        <taxon>Mammalia</taxon>
        <taxon>Eutheria</taxon>
        <taxon>Euarchontoglires</taxon>
        <taxon>Primates</taxon>
        <taxon>Haplorrhini</taxon>
        <taxon>Catarrhini</taxon>
        <taxon>Hominidae</taxon>
        <taxon>Homo</taxon>
    </lineage>
</organism>
<proteinExistence type="uncertain"/>
<protein>
    <recommendedName>
        <fullName>Putative inactive cytochrome P450 family member 4Z2</fullName>
    </recommendedName>
</protein>
<feature type="chain" id="PRO_0000330732" description="Putative inactive cytochrome P450 family member 4Z2">
    <location>
        <begin position="1"/>
        <end position="340"/>
    </location>
</feature>
<feature type="topological domain" description="Cytoplasmic" evidence="2">
    <location>
        <begin position="1"/>
        <end position="9"/>
    </location>
</feature>
<feature type="transmembrane region" description="Helical; Signal-anchor for type II membrane protein" evidence="2">
    <location>
        <begin position="10"/>
        <end position="30"/>
    </location>
</feature>
<feature type="topological domain" description="Lumenal" evidence="2">
    <location>
        <begin position="31"/>
        <end position="340"/>
    </location>
</feature>
<feature type="splice variant" id="VSP_033072" description="In isoform 2." evidence="4">
    <location>
        <begin position="293"/>
        <end position="340"/>
    </location>
</feature>
<feature type="sequence conflict" description="In Ref. 2; AAU10524." evidence="5" ref="2">
    <original>E</original>
    <variation>G</variation>
    <location>
        <position position="8"/>
    </location>
</feature>
<feature type="sequence conflict" description="In Ref. 3; BAC05026." evidence="5" ref="3">
    <original>Q</original>
    <variation>R</variation>
    <location>
        <position position="34"/>
    </location>
</feature>
<feature type="sequence conflict" description="In Ref. 2; AAU10524." evidence="5" ref="2">
    <original>D</original>
    <variation>N</variation>
    <location>
        <position position="107"/>
    </location>
</feature>
<feature type="sequence conflict" description="In Ref. 2; AAU10524." evidence="5" ref="2">
    <original>Q</original>
    <variation>H</variation>
    <location>
        <position position="173"/>
    </location>
</feature>
<feature type="sequence conflict" description="In Ref. 2; AAU10524." evidence="5" ref="2">
    <original>D</original>
    <variation>H</variation>
    <location>
        <position position="189"/>
    </location>
</feature>
<reference key="1">
    <citation type="journal article" date="2004" name="Cancer Res.">
        <title>Identification of a novel mammary-restricted cytochrome P450, CYP4Z1, with overexpression in breast carcinoma.</title>
        <authorList>
            <person name="Rieger M.A."/>
            <person name="Ebner R."/>
            <person name="Bell D.R."/>
            <person name="Kiessling A."/>
            <person name="Rohayem J."/>
            <person name="Schmitz M."/>
            <person name="Temme A."/>
            <person name="Rieber E.P."/>
            <person name="Weigle B."/>
        </authorList>
    </citation>
    <scope>NUCLEOTIDE SEQUENCE [MRNA] (ISOFORM 1)</scope>
    <scope>TISSUE SPECIFICITY</scope>
    <source>
        <tissue>Mammary carcinoma</tissue>
    </source>
</reference>
<reference key="2">
    <citation type="submission" date="2004-07" db="EMBL/GenBank/DDBJ databases">
        <authorList>
            <person name="Lin L."/>
            <person name="Zheng G."/>
            <person name="Ke R."/>
            <person name="Li H."/>
            <person name="Zhou G."/>
            <person name="Shen C."/>
            <person name="Yang S."/>
        </authorList>
    </citation>
    <scope>NUCLEOTIDE SEQUENCE [MRNA] (ISOFORM 2)</scope>
</reference>
<reference key="3">
    <citation type="journal article" date="2004" name="Nat. Genet.">
        <title>Complete sequencing and characterization of 21,243 full-length human cDNAs.</title>
        <authorList>
            <person name="Ota T."/>
            <person name="Suzuki Y."/>
            <person name="Nishikawa T."/>
            <person name="Otsuki T."/>
            <person name="Sugiyama T."/>
            <person name="Irie R."/>
            <person name="Wakamatsu A."/>
            <person name="Hayashi K."/>
            <person name="Sato H."/>
            <person name="Nagai K."/>
            <person name="Kimura K."/>
            <person name="Makita H."/>
            <person name="Sekine M."/>
            <person name="Obayashi M."/>
            <person name="Nishi T."/>
            <person name="Shibahara T."/>
            <person name="Tanaka T."/>
            <person name="Ishii S."/>
            <person name="Yamamoto J."/>
            <person name="Saito K."/>
            <person name="Kawai Y."/>
            <person name="Isono Y."/>
            <person name="Nakamura Y."/>
            <person name="Nagahari K."/>
            <person name="Murakami K."/>
            <person name="Yasuda T."/>
            <person name="Iwayanagi T."/>
            <person name="Wagatsuma M."/>
            <person name="Shiratori A."/>
            <person name="Sudo H."/>
            <person name="Hosoiri T."/>
            <person name="Kaku Y."/>
            <person name="Kodaira H."/>
            <person name="Kondo H."/>
            <person name="Sugawara M."/>
            <person name="Takahashi M."/>
            <person name="Kanda K."/>
            <person name="Yokoi T."/>
            <person name="Furuya T."/>
            <person name="Kikkawa E."/>
            <person name="Omura Y."/>
            <person name="Abe K."/>
            <person name="Kamihara K."/>
            <person name="Katsuta N."/>
            <person name="Sato K."/>
            <person name="Tanikawa M."/>
            <person name="Yamazaki M."/>
            <person name="Ninomiya K."/>
            <person name="Ishibashi T."/>
            <person name="Yamashita H."/>
            <person name="Murakawa K."/>
            <person name="Fujimori K."/>
            <person name="Tanai H."/>
            <person name="Kimata M."/>
            <person name="Watanabe M."/>
            <person name="Hiraoka S."/>
            <person name="Chiba Y."/>
            <person name="Ishida S."/>
            <person name="Ono Y."/>
            <person name="Takiguchi S."/>
            <person name="Watanabe S."/>
            <person name="Yosida M."/>
            <person name="Hotuta T."/>
            <person name="Kusano J."/>
            <person name="Kanehori K."/>
            <person name="Takahashi-Fujii A."/>
            <person name="Hara H."/>
            <person name="Tanase T.-O."/>
            <person name="Nomura Y."/>
            <person name="Togiya S."/>
            <person name="Komai F."/>
            <person name="Hara R."/>
            <person name="Takeuchi K."/>
            <person name="Arita M."/>
            <person name="Imose N."/>
            <person name="Musashino K."/>
            <person name="Yuuki H."/>
            <person name="Oshima A."/>
            <person name="Sasaki N."/>
            <person name="Aotsuka S."/>
            <person name="Yoshikawa Y."/>
            <person name="Matsunawa H."/>
            <person name="Ichihara T."/>
            <person name="Shiohata N."/>
            <person name="Sano S."/>
            <person name="Moriya S."/>
            <person name="Momiyama H."/>
            <person name="Satoh N."/>
            <person name="Takami S."/>
            <person name="Terashima Y."/>
            <person name="Suzuki O."/>
            <person name="Nakagawa S."/>
            <person name="Senoh A."/>
            <person name="Mizoguchi H."/>
            <person name="Goto Y."/>
            <person name="Shimizu F."/>
            <person name="Wakebe H."/>
            <person name="Hishigaki H."/>
            <person name="Watanabe T."/>
            <person name="Sugiyama A."/>
            <person name="Takemoto M."/>
            <person name="Kawakami B."/>
            <person name="Yamazaki M."/>
            <person name="Watanabe K."/>
            <person name="Kumagai A."/>
            <person name="Itakura S."/>
            <person name="Fukuzumi Y."/>
            <person name="Fujimori Y."/>
            <person name="Komiyama M."/>
            <person name="Tashiro H."/>
            <person name="Tanigami A."/>
            <person name="Fujiwara T."/>
            <person name="Ono T."/>
            <person name="Yamada K."/>
            <person name="Fujii Y."/>
            <person name="Ozaki K."/>
            <person name="Hirao M."/>
            <person name="Ohmori Y."/>
            <person name="Kawabata A."/>
            <person name="Hikiji T."/>
            <person name="Kobatake N."/>
            <person name="Inagaki H."/>
            <person name="Ikema Y."/>
            <person name="Okamoto S."/>
            <person name="Okitani R."/>
            <person name="Kawakami T."/>
            <person name="Noguchi S."/>
            <person name="Itoh T."/>
            <person name="Shigeta K."/>
            <person name="Senba T."/>
            <person name="Matsumura K."/>
            <person name="Nakajima Y."/>
            <person name="Mizuno T."/>
            <person name="Morinaga M."/>
            <person name="Sasaki M."/>
            <person name="Togashi T."/>
            <person name="Oyama M."/>
            <person name="Hata H."/>
            <person name="Watanabe M."/>
            <person name="Komatsu T."/>
            <person name="Mizushima-Sugano J."/>
            <person name="Satoh T."/>
            <person name="Shirai Y."/>
            <person name="Takahashi Y."/>
            <person name="Nakagawa K."/>
            <person name="Okumura K."/>
            <person name="Nagase T."/>
            <person name="Nomura N."/>
            <person name="Kikuchi H."/>
            <person name="Masuho Y."/>
            <person name="Yamashita R."/>
            <person name="Nakai K."/>
            <person name="Yada T."/>
            <person name="Nakamura Y."/>
            <person name="Ohara O."/>
            <person name="Isogai T."/>
            <person name="Sugano S."/>
        </authorList>
    </citation>
    <scope>NUCLEOTIDE SEQUENCE [LARGE SCALE MRNA] (ISOFORM 1)</scope>
    <source>
        <tissue>Mammary gland</tissue>
    </source>
</reference>
<gene>
    <name type="primary">CYP4Z2P</name>
</gene>
<evidence type="ECO:0000250" key="1"/>
<evidence type="ECO:0000255" key="2"/>
<evidence type="ECO:0000269" key="3">
    <source>
    </source>
</evidence>
<evidence type="ECO:0000303" key="4">
    <source ref="2"/>
</evidence>
<evidence type="ECO:0000305" key="5"/>
<keyword id="KW-0025">Alternative splicing</keyword>
<keyword id="KW-0472">Membrane</keyword>
<keyword id="KW-1185">Reference proteome</keyword>
<keyword id="KW-0735">Signal-anchor</keyword>
<keyword id="KW-0812">Transmembrane</keyword>
<keyword id="KW-1133">Transmembrane helix</keyword>
<comment type="cofactor">
    <cofactor evidence="1">
        <name>heme</name>
        <dbReference type="ChEBI" id="CHEBI:30413"/>
    </cofactor>
</comment>
<comment type="subcellular location">
    <subcellularLocation>
        <location evidence="5">Membrane</location>
        <topology evidence="5">Single-pass type II membrane protein</topology>
    </subcellularLocation>
</comment>
<comment type="alternative products">
    <event type="alternative splicing"/>
    <isoform>
        <id>Q8N1L4-1</id>
        <name>1</name>
        <sequence type="displayed"/>
    </isoform>
    <isoform>
        <id>Q8N1L4-2</id>
        <name>2</name>
        <sequence type="described" ref="VSP_033072"/>
    </isoform>
</comment>
<comment type="tissue specificity">
    <text evidence="3">Detected at low levels in mammary gland and mammary carcinoma.</text>
</comment>
<comment type="similarity">
    <text evidence="5">Belongs to the cytochrome P450 family.</text>
</comment>
<comment type="caution">
    <text evidence="5">Could be the product of a pseudogene. In contrast to other members of the family, it is shorter at the C-terminus and lacks the heme-binding sites.</text>
</comment>
<name>CP4Z2_HUMAN</name>
<sequence length="340" mass="40159">MEPSWLQELMAHPFLLLILLCMSLLLFQVIRLYQRRRWTIRAMHLFPAPPAHWFYGHKESYPVKEFEVYPELMEKYPCAVPLWVGPFTMFFNIHDPDYVKILLKRQDPKSAVSHKILESWVGRGLVTLDGSKWKKHRQIVKPGFNISILKIFITMMSKSVRMMLNKWEEHIAQNSRLELFQHVSLMTLDSIMKCAFSHQGSIQLDSTLDSYLKAVFNLSKISNQRMNNFLHHNDLVFKFSSQGQIFSKFNQELHQFTEKVIQDRKESLKDKLKQDTTQKRRQDFLDILLSAKSENTKDFSEADLQAEVKTFMFAGHDTTTTAISWIFYCLAKYPEHQQRC</sequence>
<dbReference type="EMBL" id="AY262057">
    <property type="status" value="NOT_ANNOTATED_CDS"/>
    <property type="molecule type" value="mRNA"/>
</dbReference>
<dbReference type="EMBL" id="AY696295">
    <property type="protein sequence ID" value="AAU10524.1"/>
    <property type="molecule type" value="mRNA"/>
</dbReference>
<dbReference type="EMBL" id="AK097373">
    <property type="protein sequence ID" value="BAC05026.1"/>
    <property type="molecule type" value="mRNA"/>
</dbReference>
<dbReference type="SMR" id="Q8N1L4"/>
<dbReference type="FunCoup" id="Q8N1L4">
    <property type="interactions" value="58"/>
</dbReference>
<dbReference type="IntAct" id="Q8N1L4">
    <property type="interactions" value="1"/>
</dbReference>
<dbReference type="GlyGen" id="Q8N1L4">
    <property type="glycosylation" value="1 site, 1 O-linked glycan (1 site)"/>
</dbReference>
<dbReference type="BioMuta" id="HGNC:24426"/>
<dbReference type="DMDM" id="187470849"/>
<dbReference type="MassIVE" id="Q8N1L4"/>
<dbReference type="PeptideAtlas" id="Q8N1L4"/>
<dbReference type="ProteomicsDB" id="71613">
    <molecule id="Q8N1L4-1"/>
</dbReference>
<dbReference type="ProteomicsDB" id="71614">
    <molecule id="Q8N1L4-2"/>
</dbReference>
<dbReference type="AGR" id="HGNC:24426"/>
<dbReference type="GeneCards" id="CYP4Z2P"/>
<dbReference type="HGNC" id="HGNC:24426">
    <property type="gene designation" value="CYP4Z2P"/>
</dbReference>
<dbReference type="MIM" id="618954">
    <property type="type" value="gene"/>
</dbReference>
<dbReference type="neXtProt" id="NX_Q8N1L4"/>
<dbReference type="InParanoid" id="Q8N1L4"/>
<dbReference type="PAN-GO" id="Q8N1L4">
    <property type="GO annotations" value="0 GO annotations based on evolutionary models"/>
</dbReference>
<dbReference type="PathwayCommons" id="Q8N1L4"/>
<dbReference type="SignaLink" id="Q8N1L4"/>
<dbReference type="Pharos" id="Q8N1L4">
    <property type="development level" value="Tdark"/>
</dbReference>
<dbReference type="Proteomes" id="UP000005640">
    <property type="component" value="Unplaced"/>
</dbReference>
<dbReference type="RNAct" id="Q8N1L4">
    <property type="molecule type" value="protein"/>
</dbReference>
<dbReference type="GO" id="GO:0016020">
    <property type="term" value="C:membrane"/>
    <property type="evidence" value="ECO:0007669"/>
    <property type="project" value="UniProtKB-SubCell"/>
</dbReference>
<dbReference type="GO" id="GO:0020037">
    <property type="term" value="F:heme binding"/>
    <property type="evidence" value="ECO:0007669"/>
    <property type="project" value="InterPro"/>
</dbReference>
<dbReference type="GO" id="GO:0005506">
    <property type="term" value="F:iron ion binding"/>
    <property type="evidence" value="ECO:0007669"/>
    <property type="project" value="InterPro"/>
</dbReference>
<dbReference type="GO" id="GO:0004497">
    <property type="term" value="F:monooxygenase activity"/>
    <property type="evidence" value="ECO:0007669"/>
    <property type="project" value="InterPro"/>
</dbReference>
<dbReference type="GO" id="GO:0016705">
    <property type="term" value="F:oxidoreductase activity, acting on paired donors, with incorporation or reduction of molecular oxygen"/>
    <property type="evidence" value="ECO:0007669"/>
    <property type="project" value="InterPro"/>
</dbReference>
<dbReference type="Gene3D" id="1.10.630.10">
    <property type="entry name" value="Cytochrome P450"/>
    <property type="match status" value="1"/>
</dbReference>
<dbReference type="InterPro" id="IPR001128">
    <property type="entry name" value="Cyt_P450"/>
</dbReference>
<dbReference type="InterPro" id="IPR036396">
    <property type="entry name" value="Cyt_P450_sf"/>
</dbReference>
<dbReference type="InterPro" id="IPR050196">
    <property type="entry name" value="Cytochrome_P450_Monoox"/>
</dbReference>
<dbReference type="PANTHER" id="PTHR24291:SF63">
    <property type="entry name" value="CYTOCHROME P450 4X1-RELATED"/>
    <property type="match status" value="1"/>
</dbReference>
<dbReference type="PANTHER" id="PTHR24291">
    <property type="entry name" value="CYTOCHROME P450 FAMILY 4"/>
    <property type="match status" value="1"/>
</dbReference>
<dbReference type="Pfam" id="PF00067">
    <property type="entry name" value="p450"/>
    <property type="match status" value="1"/>
</dbReference>
<dbReference type="SUPFAM" id="SSF48264">
    <property type="entry name" value="Cytochrome P450"/>
    <property type="match status" value="1"/>
</dbReference>
<accession>Q8N1L4</accession>
<accession>Q66ZJ5</accession>